<evidence type="ECO:0000255" key="1">
    <source>
        <dbReference type="HAMAP-Rule" id="MF_00123"/>
    </source>
</evidence>
<comment type="catalytic activity">
    <reaction evidence="1">
        <text>tRNA(Arg) + L-arginine + ATP = L-arginyl-tRNA(Arg) + AMP + diphosphate</text>
        <dbReference type="Rhea" id="RHEA:20301"/>
        <dbReference type="Rhea" id="RHEA-COMP:9658"/>
        <dbReference type="Rhea" id="RHEA-COMP:9673"/>
        <dbReference type="ChEBI" id="CHEBI:30616"/>
        <dbReference type="ChEBI" id="CHEBI:32682"/>
        <dbReference type="ChEBI" id="CHEBI:33019"/>
        <dbReference type="ChEBI" id="CHEBI:78442"/>
        <dbReference type="ChEBI" id="CHEBI:78513"/>
        <dbReference type="ChEBI" id="CHEBI:456215"/>
        <dbReference type="EC" id="6.1.1.19"/>
    </reaction>
</comment>
<comment type="subunit">
    <text evidence="1">Monomer.</text>
</comment>
<comment type="subcellular location">
    <subcellularLocation>
        <location evidence="1">Cytoplasm</location>
    </subcellularLocation>
</comment>
<comment type="similarity">
    <text evidence="1">Belongs to the class-I aminoacyl-tRNA synthetase family.</text>
</comment>
<name>SYR_LEUMM</name>
<proteinExistence type="inferred from homology"/>
<sequence>MVDNIQIVEALNAVLTDLTLQEISEKLEAPKSSDLGDVAFPTFTLAKTLHKAPQLIAADIVAAIDQEGFEKVVATGPYVNFFLDKVATSNQVLKTVFDLEGAYGDNVDGQGAKVTIDMSSPNIAKPMSMGHLRSTVIGNALANITAKNGYAPVKINHLGDWGTQFGKLIYAYKAWGSEEEVKSDPIATLLKYYVEFHEKAKENDSLNDEGRAWFKKLEDGDEEAHRLWQWFRAESLKEFSEIYDRLDITFDSFNGEAFYNDKMDKVVDLLEEKNLLVESQGAQIVDLSHINPNLTPAMIKRSDGATLYMTRDLAAALYRKETYDFAKSLYVVGGEQREHFVQMKAVLSLMGFEWSDDIEHIAFGLITFNGKKMSTRKGDVVLLKDVLDDAHELALKQIQEKNPDLGDKDTVAEEVGAGAVVFHDLMNDRTNNFDFNLEEVVRFEGDTGPYVQYTNARAKSILRKTSVQLTSDDLNLTDPATWDIITTLNNFPKTVQRAWQQREASIIAKYALNLSRAFNKYYANSKILTEDVQLNARLVLVKSVSIVLTESLRLLGVKAPEEM</sequence>
<accession>Q03WV9</accession>
<protein>
    <recommendedName>
        <fullName evidence="1">Arginine--tRNA ligase</fullName>
        <ecNumber evidence="1">6.1.1.19</ecNumber>
    </recommendedName>
    <alternativeName>
        <fullName evidence="1">Arginyl-tRNA synthetase</fullName>
        <shortName evidence="1">ArgRS</shortName>
    </alternativeName>
</protein>
<dbReference type="EC" id="6.1.1.19" evidence="1"/>
<dbReference type="EMBL" id="CP000414">
    <property type="protein sequence ID" value="ABJ62313.1"/>
    <property type="molecule type" value="Genomic_DNA"/>
</dbReference>
<dbReference type="RefSeq" id="WP_011679940.1">
    <property type="nucleotide sequence ID" value="NC_008531.1"/>
</dbReference>
<dbReference type="SMR" id="Q03WV9"/>
<dbReference type="EnsemblBacteria" id="ABJ62313">
    <property type="protein sequence ID" value="ABJ62313"/>
    <property type="gene ID" value="LEUM_1215"/>
</dbReference>
<dbReference type="GeneID" id="29576857"/>
<dbReference type="KEGG" id="lme:LEUM_1215"/>
<dbReference type="eggNOG" id="COG0018">
    <property type="taxonomic scope" value="Bacteria"/>
</dbReference>
<dbReference type="HOGENOM" id="CLU_006406_6_1_9"/>
<dbReference type="Proteomes" id="UP000000362">
    <property type="component" value="Chromosome"/>
</dbReference>
<dbReference type="GO" id="GO:0005737">
    <property type="term" value="C:cytoplasm"/>
    <property type="evidence" value="ECO:0007669"/>
    <property type="project" value="UniProtKB-SubCell"/>
</dbReference>
<dbReference type="GO" id="GO:0004814">
    <property type="term" value="F:arginine-tRNA ligase activity"/>
    <property type="evidence" value="ECO:0007669"/>
    <property type="project" value="UniProtKB-UniRule"/>
</dbReference>
<dbReference type="GO" id="GO:0005524">
    <property type="term" value="F:ATP binding"/>
    <property type="evidence" value="ECO:0007669"/>
    <property type="project" value="UniProtKB-UniRule"/>
</dbReference>
<dbReference type="GO" id="GO:0006420">
    <property type="term" value="P:arginyl-tRNA aminoacylation"/>
    <property type="evidence" value="ECO:0007669"/>
    <property type="project" value="UniProtKB-UniRule"/>
</dbReference>
<dbReference type="CDD" id="cd07956">
    <property type="entry name" value="Anticodon_Ia_Arg"/>
    <property type="match status" value="1"/>
</dbReference>
<dbReference type="CDD" id="cd00671">
    <property type="entry name" value="ArgRS_core"/>
    <property type="match status" value="1"/>
</dbReference>
<dbReference type="FunFam" id="3.40.50.620:FF:000116">
    <property type="entry name" value="Arginine--tRNA ligase"/>
    <property type="match status" value="1"/>
</dbReference>
<dbReference type="FunFam" id="1.10.730.10:FF:000006">
    <property type="entry name" value="Arginyl-tRNA synthetase 2, mitochondrial"/>
    <property type="match status" value="1"/>
</dbReference>
<dbReference type="Gene3D" id="3.30.1360.70">
    <property type="entry name" value="Arginyl tRNA synthetase N-terminal domain"/>
    <property type="match status" value="1"/>
</dbReference>
<dbReference type="Gene3D" id="3.40.50.620">
    <property type="entry name" value="HUPs"/>
    <property type="match status" value="1"/>
</dbReference>
<dbReference type="Gene3D" id="1.10.730.10">
    <property type="entry name" value="Isoleucyl-tRNA Synthetase, Domain 1"/>
    <property type="match status" value="1"/>
</dbReference>
<dbReference type="HAMAP" id="MF_00123">
    <property type="entry name" value="Arg_tRNA_synth"/>
    <property type="match status" value="1"/>
</dbReference>
<dbReference type="InterPro" id="IPR001278">
    <property type="entry name" value="Arg-tRNA-ligase"/>
</dbReference>
<dbReference type="InterPro" id="IPR005148">
    <property type="entry name" value="Arg-tRNA-synth_N"/>
</dbReference>
<dbReference type="InterPro" id="IPR036695">
    <property type="entry name" value="Arg-tRNA-synth_N_sf"/>
</dbReference>
<dbReference type="InterPro" id="IPR035684">
    <property type="entry name" value="ArgRS_core"/>
</dbReference>
<dbReference type="InterPro" id="IPR008909">
    <property type="entry name" value="DALR_anticod-bd"/>
</dbReference>
<dbReference type="InterPro" id="IPR014729">
    <property type="entry name" value="Rossmann-like_a/b/a_fold"/>
</dbReference>
<dbReference type="InterPro" id="IPR009080">
    <property type="entry name" value="tRNAsynth_Ia_anticodon-bd"/>
</dbReference>
<dbReference type="NCBIfam" id="TIGR00456">
    <property type="entry name" value="argS"/>
    <property type="match status" value="1"/>
</dbReference>
<dbReference type="PANTHER" id="PTHR11956:SF5">
    <property type="entry name" value="ARGININE--TRNA LIGASE, CYTOPLASMIC"/>
    <property type="match status" value="1"/>
</dbReference>
<dbReference type="PANTHER" id="PTHR11956">
    <property type="entry name" value="ARGINYL-TRNA SYNTHETASE"/>
    <property type="match status" value="1"/>
</dbReference>
<dbReference type="Pfam" id="PF03485">
    <property type="entry name" value="Arg_tRNA_synt_N"/>
    <property type="match status" value="1"/>
</dbReference>
<dbReference type="Pfam" id="PF05746">
    <property type="entry name" value="DALR_1"/>
    <property type="match status" value="1"/>
</dbReference>
<dbReference type="Pfam" id="PF00750">
    <property type="entry name" value="tRNA-synt_1d"/>
    <property type="match status" value="1"/>
</dbReference>
<dbReference type="PRINTS" id="PR01038">
    <property type="entry name" value="TRNASYNTHARG"/>
</dbReference>
<dbReference type="SMART" id="SM01016">
    <property type="entry name" value="Arg_tRNA_synt_N"/>
    <property type="match status" value="1"/>
</dbReference>
<dbReference type="SMART" id="SM00836">
    <property type="entry name" value="DALR_1"/>
    <property type="match status" value="1"/>
</dbReference>
<dbReference type="SUPFAM" id="SSF47323">
    <property type="entry name" value="Anticodon-binding domain of a subclass of class I aminoacyl-tRNA synthetases"/>
    <property type="match status" value="1"/>
</dbReference>
<dbReference type="SUPFAM" id="SSF55190">
    <property type="entry name" value="Arginyl-tRNA synthetase (ArgRS), N-terminal 'additional' domain"/>
    <property type="match status" value="1"/>
</dbReference>
<dbReference type="SUPFAM" id="SSF52374">
    <property type="entry name" value="Nucleotidylyl transferase"/>
    <property type="match status" value="1"/>
</dbReference>
<reference key="1">
    <citation type="journal article" date="2006" name="Proc. Natl. Acad. Sci. U.S.A.">
        <title>Comparative genomics of the lactic acid bacteria.</title>
        <authorList>
            <person name="Makarova K.S."/>
            <person name="Slesarev A."/>
            <person name="Wolf Y.I."/>
            <person name="Sorokin A."/>
            <person name="Mirkin B."/>
            <person name="Koonin E.V."/>
            <person name="Pavlov A."/>
            <person name="Pavlova N."/>
            <person name="Karamychev V."/>
            <person name="Polouchine N."/>
            <person name="Shakhova V."/>
            <person name="Grigoriev I."/>
            <person name="Lou Y."/>
            <person name="Rohksar D."/>
            <person name="Lucas S."/>
            <person name="Huang K."/>
            <person name="Goodstein D.M."/>
            <person name="Hawkins T."/>
            <person name="Plengvidhya V."/>
            <person name="Welker D."/>
            <person name="Hughes J."/>
            <person name="Goh Y."/>
            <person name="Benson A."/>
            <person name="Baldwin K."/>
            <person name="Lee J.-H."/>
            <person name="Diaz-Muniz I."/>
            <person name="Dosti B."/>
            <person name="Smeianov V."/>
            <person name="Wechter W."/>
            <person name="Barabote R."/>
            <person name="Lorca G."/>
            <person name="Altermann E."/>
            <person name="Barrangou R."/>
            <person name="Ganesan B."/>
            <person name="Xie Y."/>
            <person name="Rawsthorne H."/>
            <person name="Tamir D."/>
            <person name="Parker C."/>
            <person name="Breidt F."/>
            <person name="Broadbent J.R."/>
            <person name="Hutkins R."/>
            <person name="O'Sullivan D."/>
            <person name="Steele J."/>
            <person name="Unlu G."/>
            <person name="Saier M.H. Jr."/>
            <person name="Klaenhammer T."/>
            <person name="Richardson P."/>
            <person name="Kozyavkin S."/>
            <person name="Weimer B.C."/>
            <person name="Mills D.A."/>
        </authorList>
    </citation>
    <scope>NUCLEOTIDE SEQUENCE [LARGE SCALE GENOMIC DNA]</scope>
    <source>
        <strain>ATCC 8293 / DSM 20343 / BCRC 11652 / CCM 1803 / JCM 6124 / NCDO 523 / NBRC 100496 / NCIMB 8023 / NCTC 12954 / NRRL B-1118 / 37Y</strain>
    </source>
</reference>
<organism>
    <name type="scientific">Leuconostoc mesenteroides subsp. mesenteroides (strain ATCC 8293 / DSM 20343 / BCRC 11652 / CCM 1803 / JCM 6124 / NCDO 523 / NBRC 100496 / NCIMB 8023 / NCTC 12954 / NRRL B-1118 / 37Y)</name>
    <dbReference type="NCBI Taxonomy" id="203120"/>
    <lineage>
        <taxon>Bacteria</taxon>
        <taxon>Bacillati</taxon>
        <taxon>Bacillota</taxon>
        <taxon>Bacilli</taxon>
        <taxon>Lactobacillales</taxon>
        <taxon>Lactobacillaceae</taxon>
        <taxon>Leuconostoc</taxon>
    </lineage>
</organism>
<feature type="chain" id="PRO_1000076219" description="Arginine--tRNA ligase">
    <location>
        <begin position="1"/>
        <end position="563"/>
    </location>
</feature>
<feature type="short sequence motif" description="'HIGH' region">
    <location>
        <begin position="121"/>
        <end position="131"/>
    </location>
</feature>
<keyword id="KW-0030">Aminoacyl-tRNA synthetase</keyword>
<keyword id="KW-0067">ATP-binding</keyword>
<keyword id="KW-0963">Cytoplasm</keyword>
<keyword id="KW-0436">Ligase</keyword>
<keyword id="KW-0547">Nucleotide-binding</keyword>
<keyword id="KW-0648">Protein biosynthesis</keyword>
<keyword id="KW-1185">Reference proteome</keyword>
<gene>
    <name evidence="1" type="primary">argS</name>
    <name type="ordered locus">LEUM_1215</name>
</gene>